<reference key="1">
    <citation type="journal article" date="2007" name="Genome Res.">
        <title>Fine mapping of a swine quantitative trait locus for number of vertebrae and analysis of an orphan nuclear receptor, germ cell nuclear factor (NR6A1).</title>
        <authorList>
            <person name="Mikawa S."/>
            <person name="Morozumi T."/>
            <person name="Shimanuki S."/>
            <person name="Hayashi T."/>
            <person name="Uenishi H."/>
            <person name="Domukai M."/>
            <person name="Okumura N."/>
            <person name="Awata T."/>
        </authorList>
    </citation>
    <scope>NUCLEOTIDE SEQUENCE [GENOMIC DNA / MRNA]</scope>
    <scope>VARIANT LEU-192</scope>
    <scope>CHARACTERIZATION OF VARIANT LEU-192</scope>
    <scope>INTERACTION WITH UIMC1</scope>
    <source>
        <strain>Large white X Landrace X Duroc</strain>
    </source>
</reference>
<name>NR6A1_PIG</name>
<dbReference type="EMBL" id="AB248749">
    <property type="protein sequence ID" value="BAF37829.1"/>
    <property type="molecule type" value="mRNA"/>
</dbReference>
<dbReference type="EMBL" id="AP009124">
    <property type="protein sequence ID" value="BAF45332.1"/>
    <property type="molecule type" value="Genomic_DNA"/>
</dbReference>
<dbReference type="RefSeq" id="NP_001090968.1">
    <property type="nucleotide sequence ID" value="NM_001097499.1"/>
</dbReference>
<dbReference type="SMR" id="A0P8Z4"/>
<dbReference type="BioGRID" id="1151537">
    <property type="interactions" value="2"/>
</dbReference>
<dbReference type="FunCoup" id="A0P8Z4">
    <property type="interactions" value="127"/>
</dbReference>
<dbReference type="STRING" id="9823.ENSSSCP00000005986"/>
<dbReference type="GlyGen" id="A0P8Z4">
    <property type="glycosylation" value="1 site"/>
</dbReference>
<dbReference type="PaxDb" id="9823-ENSSSCP00000005986"/>
<dbReference type="GeneID" id="100038028"/>
<dbReference type="KEGG" id="ssc:100038028"/>
<dbReference type="CTD" id="2649"/>
<dbReference type="eggNOG" id="KOG3575">
    <property type="taxonomic scope" value="Eukaryota"/>
</dbReference>
<dbReference type="InParanoid" id="A0P8Z4"/>
<dbReference type="OrthoDB" id="10006908at2759"/>
<dbReference type="Proteomes" id="UP000008227">
    <property type="component" value="Unplaced"/>
</dbReference>
<dbReference type="Proteomes" id="UP000314985">
    <property type="component" value="Unplaced"/>
</dbReference>
<dbReference type="Proteomes" id="UP000694570">
    <property type="component" value="Unplaced"/>
</dbReference>
<dbReference type="Proteomes" id="UP000694571">
    <property type="component" value="Unplaced"/>
</dbReference>
<dbReference type="Proteomes" id="UP000694720">
    <property type="component" value="Unplaced"/>
</dbReference>
<dbReference type="Proteomes" id="UP000694722">
    <property type="component" value="Unplaced"/>
</dbReference>
<dbReference type="Proteomes" id="UP000694723">
    <property type="component" value="Unplaced"/>
</dbReference>
<dbReference type="Proteomes" id="UP000694724">
    <property type="component" value="Unplaced"/>
</dbReference>
<dbReference type="Proteomes" id="UP000694725">
    <property type="component" value="Unplaced"/>
</dbReference>
<dbReference type="Proteomes" id="UP000694726">
    <property type="component" value="Unplaced"/>
</dbReference>
<dbReference type="Proteomes" id="UP000694727">
    <property type="component" value="Unplaced"/>
</dbReference>
<dbReference type="Proteomes" id="UP000694728">
    <property type="component" value="Unplaced"/>
</dbReference>
<dbReference type="GO" id="GO:0000785">
    <property type="term" value="C:chromatin"/>
    <property type="evidence" value="ECO:0000318"/>
    <property type="project" value="GO_Central"/>
</dbReference>
<dbReference type="GO" id="GO:0005634">
    <property type="term" value="C:nucleus"/>
    <property type="evidence" value="ECO:0000318"/>
    <property type="project" value="GO_Central"/>
</dbReference>
<dbReference type="GO" id="GO:0034056">
    <property type="term" value="F:estrogen response element binding"/>
    <property type="evidence" value="ECO:0000318"/>
    <property type="project" value="GO_Central"/>
</dbReference>
<dbReference type="GO" id="GO:0004879">
    <property type="term" value="F:nuclear receptor activity"/>
    <property type="evidence" value="ECO:0000318"/>
    <property type="project" value="GO_Central"/>
</dbReference>
<dbReference type="GO" id="GO:0008270">
    <property type="term" value="F:zinc ion binding"/>
    <property type="evidence" value="ECO:0007669"/>
    <property type="project" value="UniProtKB-KW"/>
</dbReference>
<dbReference type="GO" id="GO:0030154">
    <property type="term" value="P:cell differentiation"/>
    <property type="evidence" value="ECO:0007669"/>
    <property type="project" value="UniProtKB-KW"/>
</dbReference>
<dbReference type="GO" id="GO:0006357">
    <property type="term" value="P:regulation of transcription by RNA polymerase II"/>
    <property type="evidence" value="ECO:0000318"/>
    <property type="project" value="GO_Central"/>
</dbReference>
<dbReference type="GO" id="GO:0007283">
    <property type="term" value="P:spermatogenesis"/>
    <property type="evidence" value="ECO:0007669"/>
    <property type="project" value="UniProtKB-KW"/>
</dbReference>
<dbReference type="CDD" id="cd07169">
    <property type="entry name" value="NR_DBD_GCNF_like"/>
    <property type="match status" value="1"/>
</dbReference>
<dbReference type="CDD" id="cd06953">
    <property type="entry name" value="NR_LBD_DHR4_like"/>
    <property type="match status" value="1"/>
</dbReference>
<dbReference type="FunFam" id="3.30.50.10:FF:000006">
    <property type="entry name" value="Nuclear receptor subfamily 5 group A member"/>
    <property type="match status" value="1"/>
</dbReference>
<dbReference type="FunFam" id="1.10.565.10:FF:000015">
    <property type="entry name" value="Nuclear receptor subfamily 6 group A member 1"/>
    <property type="match status" value="1"/>
</dbReference>
<dbReference type="Gene3D" id="3.30.50.10">
    <property type="entry name" value="Erythroid Transcription Factor GATA-1, subunit A"/>
    <property type="match status" value="1"/>
</dbReference>
<dbReference type="Gene3D" id="1.10.565.10">
    <property type="entry name" value="Retinoid X Receptor"/>
    <property type="match status" value="1"/>
</dbReference>
<dbReference type="InterPro" id="IPR035500">
    <property type="entry name" value="NHR-like_dom_sf"/>
</dbReference>
<dbReference type="InterPro" id="IPR000536">
    <property type="entry name" value="Nucl_hrmn_rcpt_lig-bd"/>
</dbReference>
<dbReference type="InterPro" id="IPR050200">
    <property type="entry name" value="Nuclear_hormone_rcpt_NR3"/>
</dbReference>
<dbReference type="InterPro" id="IPR001723">
    <property type="entry name" value="Nuclear_hrmn_rcpt"/>
</dbReference>
<dbReference type="InterPro" id="IPR001628">
    <property type="entry name" value="Znf_hrmn_rcpt"/>
</dbReference>
<dbReference type="InterPro" id="IPR013088">
    <property type="entry name" value="Znf_NHR/GATA"/>
</dbReference>
<dbReference type="PANTHER" id="PTHR48092">
    <property type="entry name" value="KNIRPS-RELATED PROTEIN-RELATED"/>
    <property type="match status" value="1"/>
</dbReference>
<dbReference type="Pfam" id="PF00104">
    <property type="entry name" value="Hormone_recep"/>
    <property type="match status" value="1"/>
</dbReference>
<dbReference type="Pfam" id="PF00105">
    <property type="entry name" value="zf-C4"/>
    <property type="match status" value="1"/>
</dbReference>
<dbReference type="PRINTS" id="PR00398">
    <property type="entry name" value="STRDHORMONER"/>
</dbReference>
<dbReference type="PRINTS" id="PR00047">
    <property type="entry name" value="STROIDFINGER"/>
</dbReference>
<dbReference type="SMART" id="SM00430">
    <property type="entry name" value="HOLI"/>
    <property type="match status" value="1"/>
</dbReference>
<dbReference type="SMART" id="SM00399">
    <property type="entry name" value="ZnF_C4"/>
    <property type="match status" value="1"/>
</dbReference>
<dbReference type="SUPFAM" id="SSF57716">
    <property type="entry name" value="Glucocorticoid receptor-like (DNA-binding domain)"/>
    <property type="match status" value="1"/>
</dbReference>
<dbReference type="SUPFAM" id="SSF48508">
    <property type="entry name" value="Nuclear receptor ligand-binding domain"/>
    <property type="match status" value="1"/>
</dbReference>
<dbReference type="PROSITE" id="PS51843">
    <property type="entry name" value="NR_LBD"/>
    <property type="match status" value="1"/>
</dbReference>
<dbReference type="PROSITE" id="PS00031">
    <property type="entry name" value="NUCLEAR_REC_DBD_1"/>
    <property type="match status" value="1"/>
</dbReference>
<dbReference type="PROSITE" id="PS51030">
    <property type="entry name" value="NUCLEAR_REC_DBD_2"/>
    <property type="match status" value="1"/>
</dbReference>
<comment type="function">
    <text evidence="1">Orphan nuclear receptor that binds to a response element containing the sequence 5'-TCAAGGTCA-3'. Acts as a regulator of embryonic stem cell pluripotency by mediating repression of POU5F1/OCT4: binds to the DR0 element within the POU5F1/OCT4 promoter and inhibits POU5F1/OCT4 expression during embryonic stem cell differentiation. Involved in the regulation of gene expression in germ cell development during gametogenesis.</text>
</comment>
<comment type="subunit">
    <text evidence="1">Homodimer. Interacts with UIMC1.</text>
</comment>
<comment type="subcellular location">
    <subcellularLocation>
        <location evidence="6">Nucleus</location>
    </subcellularLocation>
</comment>
<comment type="polymorphism">
    <text evidence="5">The polymorphism in position 192 seems to be responsible for the increase in number of vertebrae in domestic pigs. Wild boars uniformly have 19 vertebrae, while European commercial breeds have 21 to 23 vertebrae The ancestral form with Leu-192 has a 3 times lower binding activity to UIMC1 than Pro-192. The binding to NCOR1 is twice lower with Leu-192 than with Pro-192.</text>
</comment>
<comment type="similarity">
    <text evidence="6">Belongs to the nuclear hormone receptor family. NR6 subfamily.</text>
</comment>
<organism>
    <name type="scientific">Sus scrofa</name>
    <name type="common">Pig</name>
    <dbReference type="NCBI Taxonomy" id="9823"/>
    <lineage>
        <taxon>Eukaryota</taxon>
        <taxon>Metazoa</taxon>
        <taxon>Chordata</taxon>
        <taxon>Craniata</taxon>
        <taxon>Vertebrata</taxon>
        <taxon>Euteleostomi</taxon>
        <taxon>Mammalia</taxon>
        <taxon>Eutheria</taxon>
        <taxon>Laurasiatheria</taxon>
        <taxon>Artiodactyla</taxon>
        <taxon>Suina</taxon>
        <taxon>Suidae</taxon>
        <taxon>Sus</taxon>
    </lineage>
</organism>
<keyword id="KW-0217">Developmental protein</keyword>
<keyword id="KW-0221">Differentiation</keyword>
<keyword id="KW-0238">DNA-binding</keyword>
<keyword id="KW-0479">Metal-binding</keyword>
<keyword id="KW-0539">Nucleus</keyword>
<keyword id="KW-0675">Receptor</keyword>
<keyword id="KW-1185">Reference proteome</keyword>
<keyword id="KW-0744">Spermatogenesis</keyword>
<keyword id="KW-0804">Transcription</keyword>
<keyword id="KW-0805">Transcription regulation</keyword>
<keyword id="KW-0862">Zinc</keyword>
<keyword id="KW-0863">Zinc-finger</keyword>
<feature type="chain" id="PRO_0000311223" description="Nuclear receptor subfamily 6 group A member 1">
    <location>
        <begin position="1"/>
        <end position="479"/>
    </location>
</feature>
<feature type="domain" description="NR LBD" evidence="3">
    <location>
        <begin position="248"/>
        <end position="479"/>
    </location>
</feature>
<feature type="DNA-binding region" description="Nuclear receptor" evidence="2">
    <location>
        <begin position="57"/>
        <end position="132"/>
    </location>
</feature>
<feature type="zinc finger region" description="NR C4-type" evidence="2">
    <location>
        <begin position="60"/>
        <end position="80"/>
    </location>
</feature>
<feature type="zinc finger region" description="NR C4-type" evidence="2">
    <location>
        <begin position="96"/>
        <end position="120"/>
    </location>
</feature>
<feature type="region of interest" description="Disordered" evidence="4">
    <location>
        <begin position="1"/>
        <end position="32"/>
    </location>
</feature>
<feature type="region of interest" description="Disordered" evidence="4">
    <location>
        <begin position="131"/>
        <end position="150"/>
    </location>
</feature>
<feature type="region of interest" description="Disordered" evidence="4">
    <location>
        <begin position="162"/>
        <end position="198"/>
    </location>
</feature>
<feature type="region of interest" description="Sufficient for interaction with UIMC1" evidence="1">
    <location>
        <begin position="172"/>
        <end position="252"/>
    </location>
</feature>
<feature type="compositionally biased region" description="Gly residues" evidence="4">
    <location>
        <begin position="9"/>
        <end position="18"/>
    </location>
</feature>
<feature type="compositionally biased region" description="Basic and acidic residues" evidence="4">
    <location>
        <begin position="165"/>
        <end position="177"/>
    </location>
</feature>
<feature type="compositionally biased region" description="Polar residues" evidence="4">
    <location>
        <begin position="178"/>
        <end position="198"/>
    </location>
</feature>
<feature type="binding site" evidence="1">
    <location>
        <position position="60"/>
    </location>
    <ligand>
        <name>Zn(2+)</name>
        <dbReference type="ChEBI" id="CHEBI:29105"/>
        <label>1</label>
    </ligand>
</feature>
<feature type="binding site" evidence="1">
    <location>
        <position position="63"/>
    </location>
    <ligand>
        <name>Zn(2+)</name>
        <dbReference type="ChEBI" id="CHEBI:29105"/>
        <label>1</label>
    </ligand>
</feature>
<feature type="binding site" evidence="1">
    <location>
        <position position="77"/>
    </location>
    <ligand>
        <name>Zn(2+)</name>
        <dbReference type="ChEBI" id="CHEBI:29105"/>
        <label>1</label>
    </ligand>
</feature>
<feature type="binding site" evidence="1">
    <location>
        <position position="80"/>
    </location>
    <ligand>
        <name>Zn(2+)</name>
        <dbReference type="ChEBI" id="CHEBI:29105"/>
        <label>1</label>
    </ligand>
</feature>
<feature type="binding site" evidence="1">
    <location>
        <position position="96"/>
    </location>
    <ligand>
        <name>Zn(2+)</name>
        <dbReference type="ChEBI" id="CHEBI:29105"/>
        <label>2</label>
    </ligand>
</feature>
<feature type="binding site" evidence="1">
    <location>
        <position position="102"/>
    </location>
    <ligand>
        <name>Zn(2+)</name>
        <dbReference type="ChEBI" id="CHEBI:29105"/>
        <label>2</label>
    </ligand>
</feature>
<feature type="binding site" evidence="1">
    <location>
        <position position="112"/>
    </location>
    <ligand>
        <name>Zn(2+)</name>
        <dbReference type="ChEBI" id="CHEBI:29105"/>
        <label>2</label>
    </ligand>
</feature>
<feature type="binding site" evidence="1">
    <location>
        <position position="115"/>
    </location>
    <ligand>
        <name>Zn(2+)</name>
        <dbReference type="ChEBI" id="CHEBI:29105"/>
        <label>2</label>
    </ligand>
</feature>
<feature type="sequence variant" description="May be associated with an increase in number of vertebrae in European domestic breds." evidence="5">
    <original>P</original>
    <variation>L</variation>
    <location>
        <position position="192"/>
    </location>
</feature>
<gene>
    <name type="primary">NR6A1</name>
    <name type="synonym">GCNF</name>
</gene>
<accession>A0P8Z4</accession>
<evidence type="ECO:0000250" key="1">
    <source>
        <dbReference type="UniProtKB" id="Q64249"/>
    </source>
</evidence>
<evidence type="ECO:0000255" key="2">
    <source>
        <dbReference type="PROSITE-ProRule" id="PRU00407"/>
    </source>
</evidence>
<evidence type="ECO:0000255" key="3">
    <source>
        <dbReference type="PROSITE-ProRule" id="PRU01189"/>
    </source>
</evidence>
<evidence type="ECO:0000256" key="4">
    <source>
        <dbReference type="SAM" id="MobiDB-lite"/>
    </source>
</evidence>
<evidence type="ECO:0000269" key="5">
    <source>
    </source>
</evidence>
<evidence type="ECO:0000305" key="6"/>
<sequence length="479" mass="54350">MERDERPPSGGGGGGGSAGFLEPPAALPPPPRNGFCQDELAELDPSTISVPDDRAEQRTCLICGDRATGLHYGIISCEGCKGFFKRSICNKRVYRCSRDKNCVMSRKQRNRCQYCRLLKCLQMGMNRKAIREDGMPGGRNKSIGPVQISEEEIERIMSGQEFEEEANHWSNHGDSDHSSPGNRASESNQPSPGSTLSSRSVELNGFMAFRDQYMGMSVPPHYQYIPHLFSYSAHSPLLPPQARSLDPQSYSLIHQLVSAEDLEPLGTPMLIEDGYAVTQAELFALLCRLADELLFRQIAWIKKLPFFCELSIKDYTCLLSSTWQELILLSSLTVYSKQIFGELADVTAKYSPSDEELHRFSDEGMEVIERLIYLYHKFHQLKVSNEEYACMKAINFLNQDIRGLTSASQLEQLNKRYWYICQDFTEYKYTHQPNRFPDLMMCLPEIRYIAGKMVNVPLEQLPLLFKVVLHSCKTSVGKE</sequence>
<proteinExistence type="evidence at protein level"/>
<protein>
    <recommendedName>
        <fullName>Nuclear receptor subfamily 6 group A member 1</fullName>
    </recommendedName>
    <alternativeName>
        <fullName>Germ cell nuclear factor</fullName>
        <shortName>GCNF</shortName>
    </alternativeName>
</protein>